<comment type="function">
    <text evidence="1">An accessory protein needed during the final step in the assembly of 30S ribosomal subunit, possibly for assembly of the head region. Essential for efficient processing of 16S rRNA. May be needed both before and after RbfA during the maturation of 16S rRNA. It has affinity for free ribosomal 30S subunits but not for 70S ribosomes.</text>
</comment>
<comment type="subunit">
    <text evidence="1">Binds ribosomal protein uS19.</text>
</comment>
<comment type="subcellular location">
    <subcellularLocation>
        <location evidence="1">Cytoplasm</location>
    </subcellularLocation>
</comment>
<comment type="domain">
    <text evidence="1">The PRC barrel domain binds ribosomal protein uS19.</text>
</comment>
<comment type="similarity">
    <text evidence="1">Belongs to the RimM family.</text>
</comment>
<reference key="1">
    <citation type="journal article" date="2002" name="Proc. Natl. Acad. Sci. U.S.A.">
        <title>The Brucella suis genome reveals fundamental similarities between animal and plant pathogens and symbionts.</title>
        <authorList>
            <person name="Paulsen I.T."/>
            <person name="Seshadri R."/>
            <person name="Nelson K.E."/>
            <person name="Eisen J.A."/>
            <person name="Heidelberg J.F."/>
            <person name="Read T.D."/>
            <person name="Dodson R.J."/>
            <person name="Umayam L.A."/>
            <person name="Brinkac L.M."/>
            <person name="Beanan M.J."/>
            <person name="Daugherty S.C."/>
            <person name="DeBoy R.T."/>
            <person name="Durkin A.S."/>
            <person name="Kolonay J.F."/>
            <person name="Madupu R."/>
            <person name="Nelson W.C."/>
            <person name="Ayodeji B."/>
            <person name="Kraul M."/>
            <person name="Shetty J."/>
            <person name="Malek J.A."/>
            <person name="Van Aken S.E."/>
            <person name="Riedmuller S."/>
            <person name="Tettelin H."/>
            <person name="Gill S.R."/>
            <person name="White O."/>
            <person name="Salzberg S.L."/>
            <person name="Hoover D.L."/>
            <person name="Lindler L.E."/>
            <person name="Halling S.M."/>
            <person name="Boyle S.M."/>
            <person name="Fraser C.M."/>
        </authorList>
    </citation>
    <scope>NUCLEOTIDE SEQUENCE [LARGE SCALE GENOMIC DNA]</scope>
    <source>
        <strain>1330</strain>
    </source>
</reference>
<reference key="2">
    <citation type="journal article" date="2011" name="J. Bacteriol.">
        <title>Revised genome sequence of Brucella suis 1330.</title>
        <authorList>
            <person name="Tae H."/>
            <person name="Shallom S."/>
            <person name="Settlage R."/>
            <person name="Preston D."/>
            <person name="Adams L.G."/>
            <person name="Garner H.R."/>
        </authorList>
    </citation>
    <scope>NUCLEOTIDE SEQUENCE [LARGE SCALE GENOMIC DNA]</scope>
    <source>
        <strain>1330</strain>
    </source>
</reference>
<gene>
    <name evidence="1" type="primary">rimM</name>
    <name type="ordered locus">BR1915</name>
    <name type="ordered locus">BS1330_I1909</name>
</gene>
<name>RIMM_BRUSU</name>
<dbReference type="EMBL" id="AE014291">
    <property type="protein sequence ID" value="AAN30807.1"/>
    <property type="molecule type" value="Genomic_DNA"/>
</dbReference>
<dbReference type="EMBL" id="CP002997">
    <property type="protein sequence ID" value="AEM19224.1"/>
    <property type="molecule type" value="Genomic_DNA"/>
</dbReference>
<dbReference type="RefSeq" id="WP_002964983.1">
    <property type="nucleotide sequence ID" value="NZ_KN046804.1"/>
</dbReference>
<dbReference type="SMR" id="P66652"/>
<dbReference type="GeneID" id="93017753"/>
<dbReference type="KEGG" id="bms:BR1915"/>
<dbReference type="KEGG" id="bsi:BS1330_I1909"/>
<dbReference type="PATRIC" id="fig|204722.21.peg.2555"/>
<dbReference type="HOGENOM" id="CLU_077636_0_1_5"/>
<dbReference type="PhylomeDB" id="P66652"/>
<dbReference type="Proteomes" id="UP000007104">
    <property type="component" value="Chromosome I"/>
</dbReference>
<dbReference type="GO" id="GO:0005737">
    <property type="term" value="C:cytoplasm"/>
    <property type="evidence" value="ECO:0007669"/>
    <property type="project" value="UniProtKB-SubCell"/>
</dbReference>
<dbReference type="GO" id="GO:0005840">
    <property type="term" value="C:ribosome"/>
    <property type="evidence" value="ECO:0007669"/>
    <property type="project" value="InterPro"/>
</dbReference>
<dbReference type="GO" id="GO:0043022">
    <property type="term" value="F:ribosome binding"/>
    <property type="evidence" value="ECO:0007669"/>
    <property type="project" value="InterPro"/>
</dbReference>
<dbReference type="GO" id="GO:0042274">
    <property type="term" value="P:ribosomal small subunit biogenesis"/>
    <property type="evidence" value="ECO:0007669"/>
    <property type="project" value="UniProtKB-UniRule"/>
</dbReference>
<dbReference type="GO" id="GO:0006364">
    <property type="term" value="P:rRNA processing"/>
    <property type="evidence" value="ECO:0007669"/>
    <property type="project" value="UniProtKB-UniRule"/>
</dbReference>
<dbReference type="Gene3D" id="2.30.30.240">
    <property type="entry name" value="PRC-barrel domain"/>
    <property type="match status" value="1"/>
</dbReference>
<dbReference type="Gene3D" id="2.40.30.60">
    <property type="entry name" value="RimM"/>
    <property type="match status" value="1"/>
</dbReference>
<dbReference type="HAMAP" id="MF_00014">
    <property type="entry name" value="Ribosome_mat_RimM"/>
    <property type="match status" value="1"/>
</dbReference>
<dbReference type="InterPro" id="IPR011033">
    <property type="entry name" value="PRC_barrel-like_sf"/>
</dbReference>
<dbReference type="InterPro" id="IPR056792">
    <property type="entry name" value="PRC_RimM"/>
</dbReference>
<dbReference type="InterPro" id="IPR011961">
    <property type="entry name" value="RimM"/>
</dbReference>
<dbReference type="InterPro" id="IPR002676">
    <property type="entry name" value="RimM_N"/>
</dbReference>
<dbReference type="InterPro" id="IPR036976">
    <property type="entry name" value="RimM_N_sf"/>
</dbReference>
<dbReference type="InterPro" id="IPR009000">
    <property type="entry name" value="Transl_B-barrel_sf"/>
</dbReference>
<dbReference type="NCBIfam" id="TIGR02273">
    <property type="entry name" value="16S_RimM"/>
    <property type="match status" value="1"/>
</dbReference>
<dbReference type="PANTHER" id="PTHR33692">
    <property type="entry name" value="RIBOSOME MATURATION FACTOR RIMM"/>
    <property type="match status" value="1"/>
</dbReference>
<dbReference type="PANTHER" id="PTHR33692:SF1">
    <property type="entry name" value="RIBOSOME MATURATION FACTOR RIMM"/>
    <property type="match status" value="1"/>
</dbReference>
<dbReference type="Pfam" id="PF24986">
    <property type="entry name" value="PRC_RimM"/>
    <property type="match status" value="1"/>
</dbReference>
<dbReference type="Pfam" id="PF01782">
    <property type="entry name" value="RimM"/>
    <property type="match status" value="1"/>
</dbReference>
<dbReference type="SUPFAM" id="SSF50346">
    <property type="entry name" value="PRC-barrel domain"/>
    <property type="match status" value="1"/>
</dbReference>
<dbReference type="SUPFAM" id="SSF50447">
    <property type="entry name" value="Translation proteins"/>
    <property type="match status" value="1"/>
</dbReference>
<sequence length="189" mass="20554">MPRPENPIQLAVIGAAHGTRGEVRVKTFTGDPLAIADYGLLYDEQGKAYEILEARVAKTVVIVRFKGVNDRNAAEALNGTELFIDRSQLPDEELDEDEFFQTDLIGLEAVDGDGKSYGVVSAIFDFGGGDLIELSEKGKRPMLIPFTEAAVPEIDFDKGIIKVEPHAAGLIADEHDNPPHESGKKPKKP</sequence>
<organism>
    <name type="scientific">Brucella suis biovar 1 (strain 1330)</name>
    <dbReference type="NCBI Taxonomy" id="204722"/>
    <lineage>
        <taxon>Bacteria</taxon>
        <taxon>Pseudomonadati</taxon>
        <taxon>Pseudomonadota</taxon>
        <taxon>Alphaproteobacteria</taxon>
        <taxon>Hyphomicrobiales</taxon>
        <taxon>Brucellaceae</taxon>
        <taxon>Brucella/Ochrobactrum group</taxon>
        <taxon>Brucella</taxon>
    </lineage>
</organism>
<feature type="chain" id="PRO_0000163265" description="Ribosome maturation factor RimM">
    <location>
        <begin position="1"/>
        <end position="189"/>
    </location>
</feature>
<feature type="domain" description="PRC barrel" evidence="1">
    <location>
        <begin position="96"/>
        <end position="169"/>
    </location>
</feature>
<feature type="region of interest" description="Disordered" evidence="2">
    <location>
        <begin position="168"/>
        <end position="189"/>
    </location>
</feature>
<feature type="compositionally biased region" description="Basic and acidic residues" evidence="2">
    <location>
        <begin position="172"/>
        <end position="189"/>
    </location>
</feature>
<accession>P66652</accession>
<accession>G0K858</accession>
<accession>Q8YJD8</accession>
<keyword id="KW-0143">Chaperone</keyword>
<keyword id="KW-0963">Cytoplasm</keyword>
<keyword id="KW-0690">Ribosome biogenesis</keyword>
<keyword id="KW-0698">rRNA processing</keyword>
<protein>
    <recommendedName>
        <fullName evidence="1">Ribosome maturation factor RimM</fullName>
    </recommendedName>
</protein>
<evidence type="ECO:0000255" key="1">
    <source>
        <dbReference type="HAMAP-Rule" id="MF_00014"/>
    </source>
</evidence>
<evidence type="ECO:0000256" key="2">
    <source>
        <dbReference type="SAM" id="MobiDB-lite"/>
    </source>
</evidence>
<proteinExistence type="inferred from homology"/>